<feature type="signal peptide" evidence="1">
    <location>
        <begin position="1"/>
        <end position="28"/>
    </location>
</feature>
<feature type="chain" id="PRO_0000331218" description="Stromal cell-derived factor 2-like protein 1">
    <location>
        <begin position="29"/>
        <end position="221"/>
    </location>
</feature>
<feature type="domain" description="MIR 1" evidence="2">
    <location>
        <begin position="33"/>
        <end position="87"/>
    </location>
</feature>
<feature type="domain" description="MIR 2" evidence="2">
    <location>
        <begin position="95"/>
        <end position="150"/>
    </location>
</feature>
<feature type="domain" description="MIR 3" evidence="2">
    <location>
        <begin position="151"/>
        <end position="205"/>
    </location>
</feature>
<feature type="short sequence motif" description="Prevents secretion from ER" evidence="3">
    <location>
        <begin position="218"/>
        <end position="221"/>
    </location>
</feature>
<organism>
    <name type="scientific">Bos taurus</name>
    <name type="common">Bovine</name>
    <dbReference type="NCBI Taxonomy" id="9913"/>
    <lineage>
        <taxon>Eukaryota</taxon>
        <taxon>Metazoa</taxon>
        <taxon>Chordata</taxon>
        <taxon>Craniata</taxon>
        <taxon>Vertebrata</taxon>
        <taxon>Euteleostomi</taxon>
        <taxon>Mammalia</taxon>
        <taxon>Eutheria</taxon>
        <taxon>Laurasiatheria</taxon>
        <taxon>Artiodactyla</taxon>
        <taxon>Ruminantia</taxon>
        <taxon>Pecora</taxon>
        <taxon>Bovidae</taxon>
        <taxon>Bovinae</taxon>
        <taxon>Bos</taxon>
    </lineage>
</organism>
<protein>
    <recommendedName>
        <fullName>Stromal cell-derived factor 2-like protein 1</fullName>
        <shortName>SDF2-like protein 1</shortName>
    </recommendedName>
</protein>
<keyword id="KW-0256">Endoplasmic reticulum</keyword>
<keyword id="KW-1185">Reference proteome</keyword>
<keyword id="KW-0677">Repeat</keyword>
<keyword id="KW-0732">Signal</keyword>
<dbReference type="EMBL" id="BC102528">
    <property type="protein sequence ID" value="AAI02529.1"/>
    <property type="molecule type" value="mRNA"/>
</dbReference>
<dbReference type="RefSeq" id="NP_001030400.1">
    <property type="nucleotide sequence ID" value="NM_001035323.1"/>
</dbReference>
<dbReference type="SMR" id="Q3T083"/>
<dbReference type="FunCoup" id="Q3T083">
    <property type="interactions" value="2230"/>
</dbReference>
<dbReference type="STRING" id="9913.ENSBTAP00000065375"/>
<dbReference type="PaxDb" id="9913-ENSBTAP00000000074"/>
<dbReference type="GeneID" id="517962"/>
<dbReference type="KEGG" id="bta:517962"/>
<dbReference type="CTD" id="23753"/>
<dbReference type="VEuPathDB" id="HostDB:ENSBTAG00000000067"/>
<dbReference type="eggNOG" id="KOG3358">
    <property type="taxonomic scope" value="Eukaryota"/>
</dbReference>
<dbReference type="HOGENOM" id="CLU_078126_1_0_1"/>
<dbReference type="InParanoid" id="Q3T083"/>
<dbReference type="OMA" id="KPQHGTR"/>
<dbReference type="OrthoDB" id="5588846at2759"/>
<dbReference type="TreeFam" id="TF314557"/>
<dbReference type="Proteomes" id="UP000009136">
    <property type="component" value="Chromosome 17"/>
</dbReference>
<dbReference type="Bgee" id="ENSBTAG00000000067">
    <property type="expression patterns" value="Expressed in caput epididymis and 108 other cell types or tissues"/>
</dbReference>
<dbReference type="GO" id="GO:0005788">
    <property type="term" value="C:endoplasmic reticulum lumen"/>
    <property type="evidence" value="ECO:0007669"/>
    <property type="project" value="UniProtKB-SubCell"/>
</dbReference>
<dbReference type="CDD" id="cd23293">
    <property type="entry name" value="beta-trefoil_MIR_SDF2_meta"/>
    <property type="match status" value="1"/>
</dbReference>
<dbReference type="FunFam" id="2.80.10.50:FF:000023">
    <property type="entry name" value="Stromal cell-derived factor 2-like 1"/>
    <property type="match status" value="1"/>
</dbReference>
<dbReference type="Gene3D" id="2.80.10.50">
    <property type="match status" value="1"/>
</dbReference>
<dbReference type="InterPro" id="IPR036300">
    <property type="entry name" value="MIR_dom_sf"/>
</dbReference>
<dbReference type="InterPro" id="IPR016093">
    <property type="entry name" value="MIR_motif"/>
</dbReference>
<dbReference type="PANTHER" id="PTHR46809">
    <property type="entry name" value="STROMAL CELL-DERIVED FACTOR 2-LIKE PROTEIN"/>
    <property type="match status" value="1"/>
</dbReference>
<dbReference type="PANTHER" id="PTHR46809:SF1">
    <property type="entry name" value="STROMAL CELL-DERIVED FACTOR 2-LIKE PROTEIN 1"/>
    <property type="match status" value="1"/>
</dbReference>
<dbReference type="Pfam" id="PF02815">
    <property type="entry name" value="MIR"/>
    <property type="match status" value="1"/>
</dbReference>
<dbReference type="SMART" id="SM00472">
    <property type="entry name" value="MIR"/>
    <property type="match status" value="3"/>
</dbReference>
<dbReference type="SUPFAM" id="SSF82109">
    <property type="entry name" value="MIR domain"/>
    <property type="match status" value="1"/>
</dbReference>
<dbReference type="PROSITE" id="PS00014">
    <property type="entry name" value="ER_TARGET"/>
    <property type="match status" value="1"/>
</dbReference>
<dbReference type="PROSITE" id="PS50919">
    <property type="entry name" value="MIR"/>
    <property type="match status" value="3"/>
</dbReference>
<reference key="1">
    <citation type="submission" date="2005-08" db="EMBL/GenBank/DDBJ databases">
        <authorList>
            <consortium name="NIH - Mammalian Gene Collection (MGC) project"/>
        </authorList>
    </citation>
    <scope>NUCLEOTIDE SEQUENCE [LARGE SCALE MRNA]</scope>
    <source>
        <strain>Crossbred X Angus</strain>
        <tissue>Liver</tissue>
    </source>
</reference>
<gene>
    <name type="primary">SDF2L1</name>
</gene>
<sequence>MWSAGSGRAAGPALLGILLALSLSGGRAAKSDAGLVTCGSVLKLFNTQHRVRLHSHDIKYGSGSGQQSVTGVEASDDANSYWRIRGGTEGECPRGSPVRCGQAVRLTHVLTGKNLHTHHFPSPLTNNQEVSAFGEDGEGDDLDLWTVRCSGQHWEREAAVRFQHVGTSVFLSVTGEQYGSPIRGQHEVHGMASASAHNKWKAMEGIFIKPSPEAPGGHDEL</sequence>
<proteinExistence type="evidence at transcript level"/>
<comment type="subcellular location">
    <subcellularLocation>
        <location evidence="3">Endoplasmic reticulum lumen</location>
    </subcellularLocation>
</comment>
<evidence type="ECO:0000255" key="1"/>
<evidence type="ECO:0000255" key="2">
    <source>
        <dbReference type="PROSITE-ProRule" id="PRU00131"/>
    </source>
</evidence>
<evidence type="ECO:0000255" key="3">
    <source>
        <dbReference type="PROSITE-ProRule" id="PRU10138"/>
    </source>
</evidence>
<name>SDF2L_BOVIN</name>
<accession>Q3T083</accession>